<sequence length="78" mass="8954">MSRVCDLSGTRANNGMAVSHSHIRTKKLQQANLQQRKLWWEEGKKWIKVRVTTRTLKTIQKKGLNSYAKAMGIDLSKV</sequence>
<gene>
    <name evidence="1" type="primary">rpmB</name>
    <name evidence="1" type="synonym">rpl28</name>
    <name type="ordered locus">P9211_08581</name>
</gene>
<dbReference type="EMBL" id="CP000878">
    <property type="protein sequence ID" value="ABX08789.1"/>
    <property type="molecule type" value="Genomic_DNA"/>
</dbReference>
<dbReference type="RefSeq" id="WP_012195411.1">
    <property type="nucleotide sequence ID" value="NC_009976.1"/>
</dbReference>
<dbReference type="SMR" id="A9BAC7"/>
<dbReference type="STRING" id="93059.P9211_08581"/>
<dbReference type="KEGG" id="pmj:P9211_08581"/>
<dbReference type="eggNOG" id="COG0227">
    <property type="taxonomic scope" value="Bacteria"/>
</dbReference>
<dbReference type="HOGENOM" id="CLU_064548_3_0_3"/>
<dbReference type="OrthoDB" id="9805609at2"/>
<dbReference type="Proteomes" id="UP000000788">
    <property type="component" value="Chromosome"/>
</dbReference>
<dbReference type="GO" id="GO:1990904">
    <property type="term" value="C:ribonucleoprotein complex"/>
    <property type="evidence" value="ECO:0007669"/>
    <property type="project" value="UniProtKB-KW"/>
</dbReference>
<dbReference type="GO" id="GO:0005840">
    <property type="term" value="C:ribosome"/>
    <property type="evidence" value="ECO:0007669"/>
    <property type="project" value="UniProtKB-KW"/>
</dbReference>
<dbReference type="GO" id="GO:0003735">
    <property type="term" value="F:structural constituent of ribosome"/>
    <property type="evidence" value="ECO:0007669"/>
    <property type="project" value="InterPro"/>
</dbReference>
<dbReference type="GO" id="GO:0006412">
    <property type="term" value="P:translation"/>
    <property type="evidence" value="ECO:0007669"/>
    <property type="project" value="UniProtKB-UniRule"/>
</dbReference>
<dbReference type="Gene3D" id="2.30.170.40">
    <property type="entry name" value="Ribosomal protein L28/L24"/>
    <property type="match status" value="1"/>
</dbReference>
<dbReference type="HAMAP" id="MF_00373">
    <property type="entry name" value="Ribosomal_bL28"/>
    <property type="match status" value="1"/>
</dbReference>
<dbReference type="InterPro" id="IPR026569">
    <property type="entry name" value="Ribosomal_bL28"/>
</dbReference>
<dbReference type="InterPro" id="IPR034704">
    <property type="entry name" value="Ribosomal_bL28/bL31-like_sf"/>
</dbReference>
<dbReference type="InterPro" id="IPR001383">
    <property type="entry name" value="Ribosomal_bL28_bact-type"/>
</dbReference>
<dbReference type="InterPro" id="IPR037147">
    <property type="entry name" value="Ribosomal_bL28_sf"/>
</dbReference>
<dbReference type="NCBIfam" id="TIGR00009">
    <property type="entry name" value="L28"/>
    <property type="match status" value="1"/>
</dbReference>
<dbReference type="PANTHER" id="PTHR13528">
    <property type="entry name" value="39S RIBOSOMAL PROTEIN L28, MITOCHONDRIAL"/>
    <property type="match status" value="1"/>
</dbReference>
<dbReference type="PANTHER" id="PTHR13528:SF2">
    <property type="entry name" value="LARGE RIBOSOMAL SUBUNIT PROTEIN BL28M"/>
    <property type="match status" value="1"/>
</dbReference>
<dbReference type="Pfam" id="PF00830">
    <property type="entry name" value="Ribosomal_L28"/>
    <property type="match status" value="1"/>
</dbReference>
<dbReference type="SUPFAM" id="SSF143800">
    <property type="entry name" value="L28p-like"/>
    <property type="match status" value="1"/>
</dbReference>
<reference key="1">
    <citation type="journal article" date="2007" name="PLoS Genet.">
        <title>Patterns and implications of gene gain and loss in the evolution of Prochlorococcus.</title>
        <authorList>
            <person name="Kettler G.C."/>
            <person name="Martiny A.C."/>
            <person name="Huang K."/>
            <person name="Zucker J."/>
            <person name="Coleman M.L."/>
            <person name="Rodrigue S."/>
            <person name="Chen F."/>
            <person name="Lapidus A."/>
            <person name="Ferriera S."/>
            <person name="Johnson J."/>
            <person name="Steglich C."/>
            <person name="Church G.M."/>
            <person name="Richardson P."/>
            <person name="Chisholm S.W."/>
        </authorList>
    </citation>
    <scope>NUCLEOTIDE SEQUENCE [LARGE SCALE GENOMIC DNA]</scope>
    <source>
        <strain>MIT 9211</strain>
    </source>
</reference>
<feature type="chain" id="PRO_1000121671" description="Large ribosomal subunit protein bL28">
    <location>
        <begin position="1"/>
        <end position="78"/>
    </location>
</feature>
<name>RL28_PROM4</name>
<protein>
    <recommendedName>
        <fullName evidence="1">Large ribosomal subunit protein bL28</fullName>
    </recommendedName>
    <alternativeName>
        <fullName evidence="2">50S ribosomal protein L28</fullName>
    </alternativeName>
</protein>
<proteinExistence type="inferred from homology"/>
<accession>A9BAC7</accession>
<evidence type="ECO:0000255" key="1">
    <source>
        <dbReference type="HAMAP-Rule" id="MF_00373"/>
    </source>
</evidence>
<evidence type="ECO:0000305" key="2"/>
<comment type="similarity">
    <text evidence="1">Belongs to the bacterial ribosomal protein bL28 family.</text>
</comment>
<organism>
    <name type="scientific">Prochlorococcus marinus (strain MIT 9211)</name>
    <dbReference type="NCBI Taxonomy" id="93059"/>
    <lineage>
        <taxon>Bacteria</taxon>
        <taxon>Bacillati</taxon>
        <taxon>Cyanobacteriota</taxon>
        <taxon>Cyanophyceae</taxon>
        <taxon>Synechococcales</taxon>
        <taxon>Prochlorococcaceae</taxon>
        <taxon>Prochlorococcus</taxon>
    </lineage>
</organism>
<keyword id="KW-1185">Reference proteome</keyword>
<keyword id="KW-0687">Ribonucleoprotein</keyword>
<keyword id="KW-0689">Ribosomal protein</keyword>